<proteinExistence type="inferred from homology"/>
<comment type="function">
    <text evidence="1">Catalyzes the condensation of pantoate with beta-alanine in an ATP-dependent reaction via a pantoyl-adenylate intermediate.</text>
</comment>
<comment type="function">
    <text evidence="1">Catalyzes the transfer of a phosphate group from ATP to either CMP or dCMP to form CDP or dCDP and ADP, respectively.</text>
</comment>
<comment type="catalytic activity">
    <reaction evidence="1">
        <text>(R)-pantoate + beta-alanine + ATP = (R)-pantothenate + AMP + diphosphate + H(+)</text>
        <dbReference type="Rhea" id="RHEA:10912"/>
        <dbReference type="ChEBI" id="CHEBI:15378"/>
        <dbReference type="ChEBI" id="CHEBI:15980"/>
        <dbReference type="ChEBI" id="CHEBI:29032"/>
        <dbReference type="ChEBI" id="CHEBI:30616"/>
        <dbReference type="ChEBI" id="CHEBI:33019"/>
        <dbReference type="ChEBI" id="CHEBI:57966"/>
        <dbReference type="ChEBI" id="CHEBI:456215"/>
        <dbReference type="EC" id="6.3.2.1"/>
    </reaction>
</comment>
<comment type="catalytic activity">
    <reaction evidence="1">
        <text>CMP + ATP = CDP + ADP</text>
        <dbReference type="Rhea" id="RHEA:11600"/>
        <dbReference type="ChEBI" id="CHEBI:30616"/>
        <dbReference type="ChEBI" id="CHEBI:58069"/>
        <dbReference type="ChEBI" id="CHEBI:60377"/>
        <dbReference type="ChEBI" id="CHEBI:456216"/>
        <dbReference type="EC" id="2.7.4.25"/>
    </reaction>
</comment>
<comment type="catalytic activity">
    <reaction evidence="1">
        <text>dCMP + ATP = dCDP + ADP</text>
        <dbReference type="Rhea" id="RHEA:25094"/>
        <dbReference type="ChEBI" id="CHEBI:30616"/>
        <dbReference type="ChEBI" id="CHEBI:57566"/>
        <dbReference type="ChEBI" id="CHEBI:58593"/>
        <dbReference type="ChEBI" id="CHEBI:456216"/>
        <dbReference type="EC" id="2.7.4.25"/>
    </reaction>
</comment>
<comment type="pathway">
    <text evidence="1">Cofactor biosynthesis; (R)-pantothenate biosynthesis; (R)-pantothenate from (R)-pantoate and beta-alanine: step 1/1.</text>
</comment>
<comment type="subcellular location">
    <subcellularLocation>
        <location evidence="1">Cytoplasm</location>
    </subcellularLocation>
</comment>
<comment type="similarity">
    <text evidence="1">In the N-terminal section; belongs to the pantothenate synthetase family.</text>
</comment>
<comment type="similarity">
    <text evidence="1">In the C-terminal section; belongs to the cytidylate kinase family. Type 1 subfamily.</text>
</comment>
<sequence length="510" mass="58445">MKKVIIRKTEEIENWRRNINSEINFIPTMGNLHDGHIKLISTAKNDNSNVNLVSIFINPLQFDNKLDLENYPQTIDNDIKISFSNGADAIFIPSYEDIYPPNNKNIKFLKAPKELSSALCGLNRIGHFDGVCTVVYRLLNLIKPKNLYLGEKDWQQLLILKNLVLRKNLNVAIRSIPTQRDFDGIPLSSRNVHLSKNERKLISFFSSELLEAKKIFQQDKKINLNQIIKKLSAKKISVEYLEHLHPHTLQKARPEDNISLLAGAIRCGETRLIDHVFLMKRRPIIAIDGPAGSGKSTVTKLIAKKLNLLYLDTGAMYRALSWLIIKESVDYKIEKKLQNILKDISIFFKSNTNSHQDVYVNNYCVTKEIRSQKISSIVSKISSIKEVRKFLVAEQRKIGESGGLVAEGRDIGTTVFPHAELKIFLTASIDERAKRRKYDKNSKDSQEIDLYTLKELIKKRDFEDSNREISPLIKANDAIEIITDGYTIDEVVDKIIDLYNDRIPKETEIK</sequence>
<accession>A3PF80</accession>
<organism>
    <name type="scientific">Prochlorococcus marinus (strain MIT 9301)</name>
    <dbReference type="NCBI Taxonomy" id="167546"/>
    <lineage>
        <taxon>Bacteria</taxon>
        <taxon>Bacillati</taxon>
        <taxon>Cyanobacteriota</taxon>
        <taxon>Cyanophyceae</taxon>
        <taxon>Synechococcales</taxon>
        <taxon>Prochlorococcaceae</taxon>
        <taxon>Prochlorococcus</taxon>
    </lineage>
</organism>
<gene>
    <name evidence="1" type="primary">panC/cmk</name>
    <name type="ordered locus">P9301_17821</name>
</gene>
<feature type="chain" id="PRO_0000333297" description="Bifunctional pantoate ligase/cytidylate kinase">
    <location>
        <begin position="1"/>
        <end position="510"/>
    </location>
</feature>
<feature type="region of interest" description="Pantoate--beta-alanine ligase">
    <location>
        <begin position="1"/>
        <end position="276"/>
    </location>
</feature>
<feature type="region of interest" description="Cytidylate kinase" evidence="1">
    <location>
        <begin position="277"/>
        <end position="510"/>
    </location>
</feature>
<feature type="active site" description="Proton donor" evidence="1">
    <location>
        <position position="36"/>
    </location>
</feature>
<feature type="binding site" evidence="1">
    <location>
        <begin position="29"/>
        <end position="36"/>
    </location>
    <ligand>
        <name>ATP</name>
        <dbReference type="ChEBI" id="CHEBI:30616"/>
    </ligand>
</feature>
<feature type="binding site" evidence="1">
    <location>
        <position position="61"/>
    </location>
    <ligand>
        <name>(R)-pantoate</name>
        <dbReference type="ChEBI" id="CHEBI:15980"/>
    </ligand>
</feature>
<feature type="binding site" evidence="1">
    <location>
        <position position="61"/>
    </location>
    <ligand>
        <name>beta-alanine</name>
        <dbReference type="ChEBI" id="CHEBI:57966"/>
    </ligand>
</feature>
<feature type="binding site" evidence="1">
    <location>
        <begin position="150"/>
        <end position="153"/>
    </location>
    <ligand>
        <name>ATP</name>
        <dbReference type="ChEBI" id="CHEBI:30616"/>
    </ligand>
</feature>
<feature type="binding site" evidence="1">
    <location>
        <position position="156"/>
    </location>
    <ligand>
        <name>(R)-pantoate</name>
        <dbReference type="ChEBI" id="CHEBI:15980"/>
    </ligand>
</feature>
<feature type="binding site" evidence="1">
    <location>
        <begin position="187"/>
        <end position="190"/>
    </location>
    <ligand>
        <name>ATP</name>
        <dbReference type="ChEBI" id="CHEBI:30616"/>
    </ligand>
</feature>
<reference key="1">
    <citation type="journal article" date="2007" name="PLoS Genet.">
        <title>Patterns and implications of gene gain and loss in the evolution of Prochlorococcus.</title>
        <authorList>
            <person name="Kettler G.C."/>
            <person name="Martiny A.C."/>
            <person name="Huang K."/>
            <person name="Zucker J."/>
            <person name="Coleman M.L."/>
            <person name="Rodrigue S."/>
            <person name="Chen F."/>
            <person name="Lapidus A."/>
            <person name="Ferriera S."/>
            <person name="Johnson J."/>
            <person name="Steglich C."/>
            <person name="Church G.M."/>
            <person name="Richardson P."/>
            <person name="Chisholm S.W."/>
        </authorList>
    </citation>
    <scope>NUCLEOTIDE SEQUENCE [LARGE SCALE GENOMIC DNA]</scope>
    <source>
        <strain>MIT 9301</strain>
    </source>
</reference>
<keyword id="KW-0067">ATP-binding</keyword>
<keyword id="KW-0963">Cytoplasm</keyword>
<keyword id="KW-0418">Kinase</keyword>
<keyword id="KW-0436">Ligase</keyword>
<keyword id="KW-0511">Multifunctional enzyme</keyword>
<keyword id="KW-0547">Nucleotide-binding</keyword>
<keyword id="KW-0566">Pantothenate biosynthesis</keyword>
<keyword id="KW-1185">Reference proteome</keyword>
<keyword id="KW-0808">Transferase</keyword>
<name>PANCY_PROM0</name>
<protein>
    <recommendedName>
        <fullName evidence="1">Bifunctional pantoate ligase/cytidylate kinase</fullName>
    </recommendedName>
    <domain>
        <recommendedName>
            <fullName evidence="1">Pantothenate synthetase</fullName>
            <shortName evidence="1">PS</shortName>
            <ecNumber evidence="1">6.3.2.1</ecNumber>
        </recommendedName>
        <alternativeName>
            <fullName evidence="1">Pantoate--beta-alanine ligase</fullName>
        </alternativeName>
        <alternativeName>
            <fullName evidence="1">Pantoate-activating enzyme</fullName>
        </alternativeName>
    </domain>
    <domain>
        <recommendedName>
            <fullName evidence="1">Cytidylate kinase</fullName>
            <shortName evidence="1">CK</shortName>
            <ecNumber evidence="1">2.7.4.25</ecNumber>
        </recommendedName>
        <alternativeName>
            <fullName evidence="1">Cytidine monophosphate kinase</fullName>
            <shortName evidence="1">CMP kinase</shortName>
        </alternativeName>
    </domain>
</protein>
<evidence type="ECO:0000255" key="1">
    <source>
        <dbReference type="HAMAP-Rule" id="MF_01349"/>
    </source>
</evidence>
<dbReference type="EC" id="6.3.2.1" evidence="1"/>
<dbReference type="EC" id="2.7.4.25" evidence="1"/>
<dbReference type="EMBL" id="CP000576">
    <property type="protein sequence ID" value="ABO18405.1"/>
    <property type="molecule type" value="Genomic_DNA"/>
</dbReference>
<dbReference type="RefSeq" id="WP_011863693.1">
    <property type="nucleotide sequence ID" value="NC_009091.1"/>
</dbReference>
<dbReference type="SMR" id="A3PF80"/>
<dbReference type="STRING" id="167546.P9301_17821"/>
<dbReference type="KEGG" id="pmg:P9301_17821"/>
<dbReference type="eggNOG" id="COG0283">
    <property type="taxonomic scope" value="Bacteria"/>
</dbReference>
<dbReference type="eggNOG" id="COG0414">
    <property type="taxonomic scope" value="Bacteria"/>
</dbReference>
<dbReference type="HOGENOM" id="CLU_037427_0_0_3"/>
<dbReference type="OrthoDB" id="9773087at2"/>
<dbReference type="UniPathway" id="UPA00028">
    <property type="reaction ID" value="UER00005"/>
</dbReference>
<dbReference type="Proteomes" id="UP000001430">
    <property type="component" value="Chromosome"/>
</dbReference>
<dbReference type="GO" id="GO:0005829">
    <property type="term" value="C:cytosol"/>
    <property type="evidence" value="ECO:0007669"/>
    <property type="project" value="TreeGrafter"/>
</dbReference>
<dbReference type="GO" id="GO:0005524">
    <property type="term" value="F:ATP binding"/>
    <property type="evidence" value="ECO:0007669"/>
    <property type="project" value="UniProtKB-UniRule"/>
</dbReference>
<dbReference type="GO" id="GO:0036430">
    <property type="term" value="F:CMP kinase activity"/>
    <property type="evidence" value="ECO:0007669"/>
    <property type="project" value="RHEA"/>
</dbReference>
<dbReference type="GO" id="GO:0036431">
    <property type="term" value="F:dCMP kinase activity"/>
    <property type="evidence" value="ECO:0007669"/>
    <property type="project" value="RHEA"/>
</dbReference>
<dbReference type="GO" id="GO:0004592">
    <property type="term" value="F:pantoate-beta-alanine ligase activity"/>
    <property type="evidence" value="ECO:0007669"/>
    <property type="project" value="UniProtKB-UniRule"/>
</dbReference>
<dbReference type="GO" id="GO:0015949">
    <property type="term" value="P:nucleobase-containing small molecule interconversion"/>
    <property type="evidence" value="ECO:0007669"/>
    <property type="project" value="TreeGrafter"/>
</dbReference>
<dbReference type="GO" id="GO:0015940">
    <property type="term" value="P:pantothenate biosynthetic process"/>
    <property type="evidence" value="ECO:0007669"/>
    <property type="project" value="UniProtKB-UniRule"/>
</dbReference>
<dbReference type="GO" id="GO:0006220">
    <property type="term" value="P:pyrimidine nucleotide metabolic process"/>
    <property type="evidence" value="ECO:0007669"/>
    <property type="project" value="UniProtKB-UniRule"/>
</dbReference>
<dbReference type="CDD" id="cd02020">
    <property type="entry name" value="CMPK"/>
    <property type="match status" value="1"/>
</dbReference>
<dbReference type="CDD" id="cd02019">
    <property type="entry name" value="NK"/>
    <property type="match status" value="1"/>
</dbReference>
<dbReference type="CDD" id="cd00560">
    <property type="entry name" value="PanC"/>
    <property type="match status" value="1"/>
</dbReference>
<dbReference type="Gene3D" id="3.40.50.620">
    <property type="entry name" value="HUPs"/>
    <property type="match status" value="1"/>
</dbReference>
<dbReference type="Gene3D" id="3.40.50.300">
    <property type="entry name" value="P-loop containing nucleotide triphosphate hydrolases"/>
    <property type="match status" value="1"/>
</dbReference>
<dbReference type="Gene3D" id="3.30.1300.10">
    <property type="entry name" value="Pantoate-beta-alanine ligase, C-terminal domain"/>
    <property type="match status" value="1"/>
</dbReference>
<dbReference type="HAMAP" id="MF_00238">
    <property type="entry name" value="Cytidyl_kinase_type1"/>
    <property type="match status" value="1"/>
</dbReference>
<dbReference type="HAMAP" id="MF_00158">
    <property type="entry name" value="PanC"/>
    <property type="match status" value="1"/>
</dbReference>
<dbReference type="HAMAP" id="MF_01349">
    <property type="entry name" value="PanCY"/>
    <property type="match status" value="1"/>
</dbReference>
<dbReference type="InterPro" id="IPR003136">
    <property type="entry name" value="Cytidylate_kin"/>
</dbReference>
<dbReference type="InterPro" id="IPR011994">
    <property type="entry name" value="Cytidylate_kinase_dom"/>
</dbReference>
<dbReference type="InterPro" id="IPR027417">
    <property type="entry name" value="P-loop_NTPase"/>
</dbReference>
<dbReference type="InterPro" id="IPR003721">
    <property type="entry name" value="Pantoate_ligase"/>
</dbReference>
<dbReference type="InterPro" id="IPR024894">
    <property type="entry name" value="Pantoate_ligase/cytidylate_kin"/>
</dbReference>
<dbReference type="InterPro" id="IPR042176">
    <property type="entry name" value="Pantoate_ligase_C"/>
</dbReference>
<dbReference type="InterPro" id="IPR014729">
    <property type="entry name" value="Rossmann-like_a/b/a_fold"/>
</dbReference>
<dbReference type="NCBIfam" id="TIGR00017">
    <property type="entry name" value="cmk"/>
    <property type="match status" value="1"/>
</dbReference>
<dbReference type="NCBIfam" id="TIGR00018">
    <property type="entry name" value="panC"/>
    <property type="match status" value="1"/>
</dbReference>
<dbReference type="NCBIfam" id="NF010004">
    <property type="entry name" value="PRK13477.1"/>
    <property type="match status" value="1"/>
</dbReference>
<dbReference type="PANTHER" id="PTHR21299:SF2">
    <property type="entry name" value="CYTIDYLATE KINASE"/>
    <property type="match status" value="1"/>
</dbReference>
<dbReference type="PANTHER" id="PTHR21299">
    <property type="entry name" value="CYTIDYLATE KINASE/PANTOATE-BETA-ALANINE LIGASE"/>
    <property type="match status" value="1"/>
</dbReference>
<dbReference type="Pfam" id="PF02224">
    <property type="entry name" value="Cytidylate_kin"/>
    <property type="match status" value="1"/>
</dbReference>
<dbReference type="Pfam" id="PF02569">
    <property type="entry name" value="Pantoate_ligase"/>
    <property type="match status" value="1"/>
</dbReference>
<dbReference type="SUPFAM" id="SSF52374">
    <property type="entry name" value="Nucleotidylyl transferase"/>
    <property type="match status" value="1"/>
</dbReference>
<dbReference type="SUPFAM" id="SSF52540">
    <property type="entry name" value="P-loop containing nucleoside triphosphate hydrolases"/>
    <property type="match status" value="1"/>
</dbReference>